<proteinExistence type="evidence at protein level"/>
<sequence>MAASLVGKKIVFVTGNAKKLEEVVQILGDKFPCTLVAQKIDLPEYQGEPDEISIQKCQEAVRQVQGPVLVEDTCLCFNALGGLPGPYIKWFLEKLKPEGLHQLLAGFEDKSAYALCTFALSTGDPSQPVRLFRGRTSGRIVAPRGCQDFGWDPCFQPDGYEQTYAEMPKAEKNAVSHRFRALLELQEYFGSLAA</sequence>
<protein>
    <recommendedName>
        <fullName evidence="1 10">Inosine triphosphate pyrophosphatase</fullName>
        <shortName evidence="1">ITPase</shortName>
        <shortName evidence="1">Inosine triphosphatase</shortName>
        <ecNumber evidence="1 2 5">3.6.1.66</ecNumber>
    </recommendedName>
    <alternativeName>
        <fullName evidence="1">Non-canonical purine NTP pyrophosphatase</fullName>
    </alternativeName>
    <alternativeName>
        <fullName evidence="1">Non-standard purine NTP pyrophosphatase</fullName>
    </alternativeName>
    <alternativeName>
        <fullName evidence="1">Nucleoside-triphosphate diphosphatase</fullName>
    </alternativeName>
    <alternativeName>
        <fullName evidence="1">Nucleoside-triphosphate pyrophosphatase</fullName>
        <shortName evidence="1">NTPase</shortName>
    </alternativeName>
    <alternativeName>
        <fullName>Putative oncogene protein hlc14-06-p</fullName>
    </alternativeName>
    <alternativeName>
        <fullName evidence="1">XTP/dITP diphosphatase</fullName>
    </alternativeName>
</protein>
<dbReference type="EC" id="3.6.1.66" evidence="1 2 5"/>
<dbReference type="EMBL" id="AF219116">
    <property type="protein sequence ID" value="AAK21848.1"/>
    <property type="molecule type" value="mRNA"/>
</dbReference>
<dbReference type="EMBL" id="AF063607">
    <property type="protein sequence ID" value="AAG43165.1"/>
    <property type="molecule type" value="mRNA"/>
</dbReference>
<dbReference type="EMBL" id="AF026816">
    <property type="protein sequence ID" value="AAB82608.2"/>
    <property type="molecule type" value="mRNA"/>
</dbReference>
<dbReference type="EMBL" id="EF199841">
    <property type="protein sequence ID" value="ABP01354.1"/>
    <property type="molecule type" value="mRNA"/>
</dbReference>
<dbReference type="EMBL" id="EF213026">
    <property type="protein sequence ID" value="ABO70316.1"/>
    <property type="molecule type" value="mRNA"/>
</dbReference>
<dbReference type="EMBL" id="AB062127">
    <property type="protein sequence ID" value="BAB93459.1"/>
    <property type="molecule type" value="mRNA"/>
</dbReference>
<dbReference type="EMBL" id="AL109976">
    <property type="status" value="NOT_ANNOTATED_CDS"/>
    <property type="molecule type" value="Genomic_DNA"/>
</dbReference>
<dbReference type="EMBL" id="AL121891">
    <property type="status" value="NOT_ANNOTATED_CDS"/>
    <property type="molecule type" value="Genomic_DNA"/>
</dbReference>
<dbReference type="EMBL" id="CH471133">
    <property type="protein sequence ID" value="EAX10541.1"/>
    <property type="molecule type" value="Genomic_DNA"/>
</dbReference>
<dbReference type="EMBL" id="BC010138">
    <property type="protein sequence ID" value="AAH10138.1"/>
    <property type="molecule type" value="mRNA"/>
</dbReference>
<dbReference type="EMBL" id="BI115811">
    <property type="status" value="NOT_ANNOTATED_CDS"/>
    <property type="molecule type" value="mRNA"/>
</dbReference>
<dbReference type="CCDS" id="CCDS13051.1">
    <molecule id="Q9BY32-1"/>
</dbReference>
<dbReference type="CCDS" id="CCDS46576.1">
    <molecule id="Q9BY32-2"/>
</dbReference>
<dbReference type="CCDS" id="CCDS58762.1">
    <molecule id="Q9BY32-3"/>
</dbReference>
<dbReference type="RefSeq" id="NP_001254552.1">
    <molecule id="Q9BY32-3"/>
    <property type="nucleotide sequence ID" value="NM_001267623.2"/>
</dbReference>
<dbReference type="RefSeq" id="NP_258412.1">
    <molecule id="Q9BY32-1"/>
    <property type="nucleotide sequence ID" value="NM_033453.4"/>
</dbReference>
<dbReference type="RefSeq" id="NP_852470.1">
    <molecule id="Q9BY32-2"/>
    <property type="nucleotide sequence ID" value="NM_181493.4"/>
</dbReference>
<dbReference type="PDB" id="2CAR">
    <property type="method" value="X-ray"/>
    <property type="resolution" value="1.09 A"/>
    <property type="chains" value="A/B=1-194"/>
</dbReference>
<dbReference type="PDB" id="2I5D">
    <property type="method" value="X-ray"/>
    <property type="resolution" value="1.63 A"/>
    <property type="chains" value="A=1-194"/>
</dbReference>
<dbReference type="PDB" id="2J4E">
    <property type="method" value="X-ray"/>
    <property type="resolution" value="2.80 A"/>
    <property type="chains" value="A/B/C/D/E/F/G/H=1-194"/>
</dbReference>
<dbReference type="PDB" id="4F95">
    <property type="method" value="X-ray"/>
    <property type="resolution" value="2.07 A"/>
    <property type="chains" value="A=1-194"/>
</dbReference>
<dbReference type="PDBsum" id="2CAR"/>
<dbReference type="PDBsum" id="2I5D"/>
<dbReference type="PDBsum" id="2J4E"/>
<dbReference type="PDBsum" id="4F95"/>
<dbReference type="SMR" id="Q9BY32"/>
<dbReference type="BioGRID" id="109909">
    <property type="interactions" value="102"/>
</dbReference>
<dbReference type="FunCoup" id="Q9BY32">
    <property type="interactions" value="2918"/>
</dbReference>
<dbReference type="IntAct" id="Q9BY32">
    <property type="interactions" value="32"/>
</dbReference>
<dbReference type="STRING" id="9606.ENSP00000369456"/>
<dbReference type="BindingDB" id="Q9BY32"/>
<dbReference type="ChEMBL" id="CHEMBL4105788"/>
<dbReference type="DrugBank" id="DB00993">
    <property type="generic name" value="Azathioprine"/>
</dbReference>
<dbReference type="DrugBank" id="DB04272">
    <property type="generic name" value="Citric acid"/>
</dbReference>
<dbReference type="GlyGen" id="Q9BY32">
    <property type="glycosylation" value="1 site, 1 O-linked glycan (1 site)"/>
</dbReference>
<dbReference type="iPTMnet" id="Q9BY32"/>
<dbReference type="MetOSite" id="Q9BY32"/>
<dbReference type="PhosphoSitePlus" id="Q9BY32"/>
<dbReference type="BioMuta" id="ITPA"/>
<dbReference type="DMDM" id="30173120"/>
<dbReference type="jPOST" id="Q9BY32"/>
<dbReference type="MassIVE" id="Q9BY32"/>
<dbReference type="PaxDb" id="9606-ENSP00000369456"/>
<dbReference type="PeptideAtlas" id="Q9BY32"/>
<dbReference type="ProteomicsDB" id="216"/>
<dbReference type="ProteomicsDB" id="79572">
    <molecule id="Q9BY32-1"/>
</dbReference>
<dbReference type="ProteomicsDB" id="79573">
    <molecule id="Q9BY32-2"/>
</dbReference>
<dbReference type="Pumba" id="Q9BY32"/>
<dbReference type="TopDownProteomics" id="Q9BY32-1">
    <molecule id="Q9BY32-1"/>
</dbReference>
<dbReference type="Antibodypedia" id="7322">
    <property type="antibodies" value="291 antibodies from 32 providers"/>
</dbReference>
<dbReference type="DNASU" id="3704"/>
<dbReference type="Ensembl" id="ENST00000380113.8">
    <molecule id="Q9BY32-1"/>
    <property type="protein sequence ID" value="ENSP00000369456.3"/>
    <property type="gene ID" value="ENSG00000125877.13"/>
</dbReference>
<dbReference type="Ensembl" id="ENST00000399838.3">
    <molecule id="Q9BY32-3"/>
    <property type="protein sequence ID" value="ENSP00000382732.3"/>
    <property type="gene ID" value="ENSG00000125877.13"/>
</dbReference>
<dbReference type="Ensembl" id="ENST00000455664.6">
    <molecule id="Q9BY32-2"/>
    <property type="protein sequence ID" value="ENSP00000413282.1"/>
    <property type="gene ID" value="ENSG00000125877.13"/>
</dbReference>
<dbReference type="GeneID" id="3704"/>
<dbReference type="KEGG" id="hsa:3704"/>
<dbReference type="MANE-Select" id="ENST00000380113.8">
    <property type="protein sequence ID" value="ENSP00000369456.3"/>
    <property type="RefSeq nucleotide sequence ID" value="NM_033453.4"/>
    <property type="RefSeq protein sequence ID" value="NP_258412.1"/>
</dbReference>
<dbReference type="UCSC" id="uc002wid.4">
    <molecule id="Q9BY32-1"/>
    <property type="organism name" value="human"/>
</dbReference>
<dbReference type="AGR" id="HGNC:6176"/>
<dbReference type="CTD" id="3704"/>
<dbReference type="DisGeNET" id="3704"/>
<dbReference type="GeneCards" id="ITPA"/>
<dbReference type="HGNC" id="HGNC:6176">
    <property type="gene designation" value="ITPA"/>
</dbReference>
<dbReference type="HPA" id="ENSG00000125877">
    <property type="expression patterns" value="Low tissue specificity"/>
</dbReference>
<dbReference type="MalaCards" id="ITPA"/>
<dbReference type="MIM" id="147520">
    <property type="type" value="gene"/>
</dbReference>
<dbReference type="MIM" id="613850">
    <property type="type" value="phenotype"/>
</dbReference>
<dbReference type="MIM" id="616647">
    <property type="type" value="phenotype"/>
</dbReference>
<dbReference type="neXtProt" id="NX_Q9BY32"/>
<dbReference type="OpenTargets" id="ENSG00000125877"/>
<dbReference type="Orphanet" id="457375">
    <property type="disease" value="ITPA-related lethal infantile neurological disorder with cataract and cardiac involvement"/>
</dbReference>
<dbReference type="PharmGKB" id="PA29973"/>
<dbReference type="VEuPathDB" id="HostDB:ENSG00000125877"/>
<dbReference type="eggNOG" id="KOG3222">
    <property type="taxonomic scope" value="Eukaryota"/>
</dbReference>
<dbReference type="GeneTree" id="ENSGT00390000015399"/>
<dbReference type="HOGENOM" id="CLU_082080_1_1_1"/>
<dbReference type="InParanoid" id="Q9BY32"/>
<dbReference type="OMA" id="YDPIFQP"/>
<dbReference type="OrthoDB" id="6288734at2759"/>
<dbReference type="PAN-GO" id="Q9BY32">
    <property type="GO annotations" value="3 GO annotations based on evolutionary models"/>
</dbReference>
<dbReference type="PhylomeDB" id="Q9BY32"/>
<dbReference type="TreeFam" id="TF105614"/>
<dbReference type="BRENDA" id="3.6.1.66">
    <property type="organism ID" value="2681"/>
</dbReference>
<dbReference type="BRENDA" id="3.6.1.9">
    <property type="organism ID" value="2681"/>
</dbReference>
<dbReference type="PathwayCommons" id="Q9BY32"/>
<dbReference type="Reactome" id="R-HSA-74259">
    <property type="pathway name" value="Purine catabolism"/>
</dbReference>
<dbReference type="Reactome" id="R-HSA-9755088">
    <property type="pathway name" value="Ribavirin ADME"/>
</dbReference>
<dbReference type="SABIO-RK" id="Q9BY32"/>
<dbReference type="SignaLink" id="Q9BY32"/>
<dbReference type="BioGRID-ORCS" id="3704">
    <property type="hits" value="18 hits in 1161 CRISPR screens"/>
</dbReference>
<dbReference type="ChiTaRS" id="ITPA">
    <property type="organism name" value="human"/>
</dbReference>
<dbReference type="EvolutionaryTrace" id="Q9BY32"/>
<dbReference type="GeneWiki" id="ITPA"/>
<dbReference type="GenomeRNAi" id="3704"/>
<dbReference type="Pharos" id="Q9BY32">
    <property type="development level" value="Tbio"/>
</dbReference>
<dbReference type="PRO" id="PR:Q9BY32"/>
<dbReference type="Proteomes" id="UP000005640">
    <property type="component" value="Chromosome 20"/>
</dbReference>
<dbReference type="RNAct" id="Q9BY32">
    <property type="molecule type" value="protein"/>
</dbReference>
<dbReference type="Bgee" id="ENSG00000125877">
    <property type="expression patterns" value="Expressed in right lobe of thyroid gland and 197 other cell types or tissues"/>
</dbReference>
<dbReference type="ExpressionAtlas" id="Q9BY32">
    <property type="expression patterns" value="baseline and differential"/>
</dbReference>
<dbReference type="GO" id="GO:0005737">
    <property type="term" value="C:cytoplasm"/>
    <property type="evidence" value="ECO:0000318"/>
    <property type="project" value="GO_Central"/>
</dbReference>
<dbReference type="GO" id="GO:0005829">
    <property type="term" value="C:cytosol"/>
    <property type="evidence" value="ECO:0000314"/>
    <property type="project" value="HPA"/>
</dbReference>
<dbReference type="GO" id="GO:0043231">
    <property type="term" value="C:intracellular membrane-bounded organelle"/>
    <property type="evidence" value="ECO:0000314"/>
    <property type="project" value="HPA"/>
</dbReference>
<dbReference type="GO" id="GO:0005654">
    <property type="term" value="C:nucleoplasm"/>
    <property type="evidence" value="ECO:0000314"/>
    <property type="project" value="HPA"/>
</dbReference>
<dbReference type="GO" id="GO:0035870">
    <property type="term" value="F:dITP diphosphatase activity"/>
    <property type="evidence" value="ECO:0007669"/>
    <property type="project" value="Ensembl"/>
</dbReference>
<dbReference type="GO" id="GO:0042802">
    <property type="term" value="F:identical protein binding"/>
    <property type="evidence" value="ECO:0000353"/>
    <property type="project" value="IntAct"/>
</dbReference>
<dbReference type="GO" id="GO:0036220">
    <property type="term" value="F:ITP diphosphatase activity"/>
    <property type="evidence" value="ECO:0007669"/>
    <property type="project" value="RHEA"/>
</dbReference>
<dbReference type="GO" id="GO:0046872">
    <property type="term" value="F:metal ion binding"/>
    <property type="evidence" value="ECO:0007669"/>
    <property type="project" value="UniProtKB-KW"/>
</dbReference>
<dbReference type="GO" id="GO:0047429">
    <property type="term" value="F:nucleoside triphosphate diphosphatase activity"/>
    <property type="evidence" value="ECO:0000318"/>
    <property type="project" value="GO_Central"/>
</dbReference>
<dbReference type="GO" id="GO:0000166">
    <property type="term" value="F:nucleotide binding"/>
    <property type="evidence" value="ECO:0007669"/>
    <property type="project" value="UniProtKB-KW"/>
</dbReference>
<dbReference type="GO" id="GO:0036222">
    <property type="term" value="F:XTP diphosphatase activity"/>
    <property type="evidence" value="ECO:0007669"/>
    <property type="project" value="RHEA"/>
</dbReference>
<dbReference type="GO" id="GO:0051276">
    <property type="term" value="P:chromosome organization"/>
    <property type="evidence" value="ECO:0007669"/>
    <property type="project" value="Ensembl"/>
</dbReference>
<dbReference type="GO" id="GO:0009204">
    <property type="term" value="P:deoxyribonucleoside triphosphate catabolic process"/>
    <property type="evidence" value="ECO:0007669"/>
    <property type="project" value="UniProtKB-UniRule"/>
</dbReference>
<dbReference type="GO" id="GO:0006193">
    <property type="term" value="P:ITP catabolic process"/>
    <property type="evidence" value="ECO:0007669"/>
    <property type="project" value="Ensembl"/>
</dbReference>
<dbReference type="GO" id="GO:0009143">
    <property type="term" value="P:nucleoside triphosphate catabolic process"/>
    <property type="evidence" value="ECO:0000318"/>
    <property type="project" value="GO_Central"/>
</dbReference>
<dbReference type="CDD" id="cd00515">
    <property type="entry name" value="HAM1"/>
    <property type="match status" value="1"/>
</dbReference>
<dbReference type="FunFam" id="3.90.950.10:FF:000003">
    <property type="entry name" value="Inosine triphosphate pyrophosphatase"/>
    <property type="match status" value="1"/>
</dbReference>
<dbReference type="Gene3D" id="3.90.950.10">
    <property type="match status" value="1"/>
</dbReference>
<dbReference type="HAMAP" id="MF_03148">
    <property type="entry name" value="HAM1_NTPase"/>
    <property type="match status" value="1"/>
</dbReference>
<dbReference type="InterPro" id="IPR027502">
    <property type="entry name" value="ITPase"/>
</dbReference>
<dbReference type="InterPro" id="IPR029001">
    <property type="entry name" value="ITPase-like_fam"/>
</dbReference>
<dbReference type="InterPro" id="IPR002637">
    <property type="entry name" value="RdgB/HAM1"/>
</dbReference>
<dbReference type="NCBIfam" id="TIGR00042">
    <property type="entry name" value="RdgB/HAM1 family non-canonical purine NTP pyrophosphatase"/>
    <property type="match status" value="1"/>
</dbReference>
<dbReference type="PANTHER" id="PTHR11067:SF9">
    <property type="entry name" value="INOSINE TRIPHOSPHATE PYROPHOSPHATASE"/>
    <property type="match status" value="1"/>
</dbReference>
<dbReference type="PANTHER" id="PTHR11067">
    <property type="entry name" value="INOSINE TRIPHOSPHATE PYROPHOSPHATASE/HAM1 PROTEIN"/>
    <property type="match status" value="1"/>
</dbReference>
<dbReference type="Pfam" id="PF01725">
    <property type="entry name" value="Ham1p_like"/>
    <property type="match status" value="1"/>
</dbReference>
<dbReference type="SUPFAM" id="SSF52972">
    <property type="entry name" value="ITPase-like"/>
    <property type="match status" value="1"/>
</dbReference>
<keyword id="KW-0002">3D-structure</keyword>
<keyword id="KW-0007">Acetylation</keyword>
<keyword id="KW-0025">Alternative splicing</keyword>
<keyword id="KW-0963">Cytoplasm</keyword>
<keyword id="KW-0903">Direct protein sequencing</keyword>
<keyword id="KW-0225">Disease variant</keyword>
<keyword id="KW-0887">Epilepsy</keyword>
<keyword id="KW-0378">Hydrolase</keyword>
<keyword id="KW-0460">Magnesium</keyword>
<keyword id="KW-0479">Metal-binding</keyword>
<keyword id="KW-0546">Nucleotide metabolism</keyword>
<keyword id="KW-0547">Nucleotide-binding</keyword>
<keyword id="KW-1267">Proteomics identification</keyword>
<keyword id="KW-1185">Reference proteome</keyword>
<gene>
    <name evidence="1" type="primary">ITPA</name>
    <name type="synonym">C20orf37</name>
    <name type="ORF">My049</name>
    <name type="ORF">OK/SW-cl.9</name>
</gene>
<comment type="function">
    <text evidence="1 2 5">Pyrophosphatase that hydrolyzes the non-canonical purine nucleotides inosine triphosphate (ITP), deoxyinosine triphosphate (dITP) as well as 2'-deoxy-N-6-hydroxylaminopurine triphosphate (dHAPTP) and xanthosine 5'-triphosphate (XTP) to their respective monophosphate derivatives. The enzyme does not distinguish between the deoxy- and ribose forms. Probably excludes non-canonical purines from RNA and DNA precursor pools, thus preventing their incorporation into RNA and DNA and avoiding chromosomal lesions.</text>
</comment>
<comment type="catalytic activity">
    <reaction evidence="2">
        <text>ITP + H2O = IMP + diphosphate + H(+)</text>
        <dbReference type="Rhea" id="RHEA:29399"/>
        <dbReference type="ChEBI" id="CHEBI:15377"/>
        <dbReference type="ChEBI" id="CHEBI:15378"/>
        <dbReference type="ChEBI" id="CHEBI:33019"/>
        <dbReference type="ChEBI" id="CHEBI:58053"/>
        <dbReference type="ChEBI" id="CHEBI:61402"/>
        <dbReference type="EC" id="3.6.1.66"/>
    </reaction>
    <physiologicalReaction direction="left-to-right" evidence="14">
        <dbReference type="Rhea" id="RHEA:29400"/>
    </physiologicalReaction>
</comment>
<comment type="catalytic activity">
    <reaction evidence="2 5">
        <text>dITP + H2O = dIMP + diphosphate + H(+)</text>
        <dbReference type="Rhea" id="RHEA:28342"/>
        <dbReference type="ChEBI" id="CHEBI:15377"/>
        <dbReference type="ChEBI" id="CHEBI:15378"/>
        <dbReference type="ChEBI" id="CHEBI:33019"/>
        <dbReference type="ChEBI" id="CHEBI:61194"/>
        <dbReference type="ChEBI" id="CHEBI:61382"/>
        <dbReference type="EC" id="3.6.1.66"/>
    </reaction>
    <physiologicalReaction direction="left-to-right" evidence="14 15">
        <dbReference type="Rhea" id="RHEA:28343"/>
    </physiologicalReaction>
</comment>
<comment type="catalytic activity">
    <reaction evidence="2">
        <text>XTP + H2O = XMP + diphosphate + H(+)</text>
        <dbReference type="Rhea" id="RHEA:28610"/>
        <dbReference type="ChEBI" id="CHEBI:15377"/>
        <dbReference type="ChEBI" id="CHEBI:15378"/>
        <dbReference type="ChEBI" id="CHEBI:33019"/>
        <dbReference type="ChEBI" id="CHEBI:57464"/>
        <dbReference type="ChEBI" id="CHEBI:61314"/>
        <dbReference type="EC" id="3.6.1.66"/>
    </reaction>
    <physiologicalReaction direction="left-to-right" evidence="14">
        <dbReference type="Rhea" id="RHEA:28611"/>
    </physiologicalReaction>
</comment>
<comment type="catalytic activity">
    <reaction evidence="5">
        <text>N(6)-hydroxy-dATP + H2O = N(6)-hydroxy-dAMP + diphosphate + H(+)</text>
        <dbReference type="Rhea" id="RHEA:83971"/>
        <dbReference type="ChEBI" id="CHEBI:15377"/>
        <dbReference type="ChEBI" id="CHEBI:15378"/>
        <dbReference type="ChEBI" id="CHEBI:33019"/>
        <dbReference type="ChEBI" id="CHEBI:233529"/>
        <dbReference type="ChEBI" id="CHEBI:233530"/>
    </reaction>
    <physiologicalReaction direction="left-to-right" evidence="15">
        <dbReference type="Rhea" id="RHEA:83972"/>
    </physiologicalReaction>
</comment>
<comment type="cofactor">
    <cofactor evidence="2 6">
        <name>Mg(2+)</name>
        <dbReference type="ChEBI" id="CHEBI:18420"/>
    </cofactor>
    <text evidence="6">Binds 1 Mg(2+) ion per subunit.</text>
</comment>
<comment type="biophysicochemical properties">
    <kinetics>
        <KM evidence="2">0.51 mM for ITP</KM>
        <KM evidence="2">0.31 mM for dITP</KM>
        <KM evidence="2">0.57 mM for XTP</KM>
        <KM evidence="5">32.5 uM for dITP</KM>
        <KM evidence="5">40.7 uM for dHAPTP</KM>
        <KM evidence="5">993 uM for dGTP</KM>
        <Vmax evidence="2">1520.0 umol/min/mg enzyme with ITP as substrate</Vmax>
        <Vmax evidence="2">940.0 umol/min/mg enzyme with dITP as substrate</Vmax>
        <Vmax evidence="2">1680.0 umol/min/mg enzyme with XTP as substrate</Vmax>
        <text evidence="2 5">kcat is 580 sec(-1) with ITP as substrate (PubMed:11278832). kcat is 360 sec(-1) with dITP as substrate (PubMed:11278832). kcat is 640 sec(-1) with XTP as substrate (PubMed:11278832). kcat is 79.6 sec(-1) with dITP as substrate (PubMed:17090528). kcat is 85.3 sec(-1) with dHAPTP as substrate (PubMed:17090528). kcat is 12.1 sec(-1) with dGTP as substrate (PubMed:17090528).</text>
    </kinetics>
    <phDependence>
        <text evidence="2">Optimum pH is 10.</text>
    </phDependence>
</comment>
<comment type="subunit">
    <text evidence="1 2 6">Homodimer.</text>
</comment>
<comment type="interaction">
    <interactant intactId="EBI-2831363">
        <id>Q9BY32</id>
    </interactant>
    <interactant intactId="EBI-2831363">
        <id>Q9BY32</id>
        <label>ITPA</label>
    </interactant>
    <organismsDiffer>false</organismsDiffer>
    <experiments>4</experiments>
</comment>
<comment type="subcellular location">
    <subcellularLocation>
        <location evidence="1 2">Cytoplasm</location>
    </subcellularLocation>
</comment>
<comment type="alternative products">
    <event type="alternative splicing"/>
    <isoform>
        <id>Q9BY32-1</id>
        <name>1</name>
        <sequence type="displayed"/>
    </isoform>
    <isoform>
        <id>Q9BY32-2</id>
        <name>2</name>
        <sequence type="described" ref="VSP_042548"/>
    </isoform>
    <isoform>
        <id>Q9BY32-3</id>
        <name>3</name>
        <sequence type="described" ref="VSP_045545"/>
    </isoform>
</comment>
<comment type="tissue specificity">
    <text>Ubiquitous. Highly expressed in heart, liver, sex glands, thyroid and adrenal gland.</text>
</comment>
<comment type="disease" evidence="3 4 8">
    <disease id="DI-01825">
        <name>Inosine triphosphate pyrophosphohydrolase deficiency</name>
        <acronym>ITPAD</acronym>
        <description>A common inherited condition characterized by the abnormal accumulation of inosine triphosphate in erythrocytes. It might have pharmacogenomic implications and be related to increased drug toxicity of purine analog drugs.</description>
        <dbReference type="MIM" id="613850"/>
    </disease>
    <text>The disease is caused by variants affecting the gene represented in this entry. Three different human populations have been reported with respect to their ITPase activity: high, mean (25% of high) and low activity. The variant Thr-32 is associated with complete loss of enzyme activity, may be by altering the local secondary structure of the protein. Heterozygotes for this polymorphism have 22.5% of the control activity: this is consistent with a dimeric structure of the enzyme.</text>
</comment>
<comment type="disease" evidence="7">
    <disease id="DI-04578">
        <name>Developmental and epileptic encephalopathy 35</name>
        <acronym>DEE35</acronym>
        <description>A form of epileptic encephalopathy, a heterogeneous group of severe early-onset epilepsies characterized by refractory seizures, neurodevelopmental impairment, and poor prognosis. Development is normal prior to seizure onset, after which cognitive and motor delays become apparent. DEE35 is characterized by onset of seizures in the first months of life associated with essentially no normal development. Many patients die in early childhood.</description>
        <dbReference type="MIM" id="616647"/>
    </disease>
    <text>The disease is caused by variants affecting the gene represented in this entry.</text>
</comment>
<comment type="similarity">
    <text evidence="1">Belongs to the HAM1 NTPase family.</text>
</comment>
<name>ITPA_HUMAN</name>
<reference key="1">
    <citation type="journal article" date="2001" name="J. Biol. Chem.">
        <title>Cloning, expression, and characterization of a human inosine triphosphate pyrophosphatase encoded by the ITPA gene.</title>
        <authorList>
            <person name="Lin S."/>
            <person name="McLennan A.G."/>
            <person name="Ying K."/>
            <person name="Wang Z."/>
            <person name="Gu S."/>
            <person name="Jin H."/>
            <person name="Wu C."/>
            <person name="Lu W."/>
            <person name="Yuan Y."/>
            <person name="Tang R."/>
            <person name="Xie Y."/>
            <person name="Mao Y."/>
        </authorList>
    </citation>
    <scope>NUCLEOTIDE SEQUENCE [MRNA] (ISOFORM 1)</scope>
    <scope>FUNCTION</scope>
    <scope>CATALYTIC ACTIVITY</scope>
    <scope>COFACTOR</scope>
    <scope>SUBUNIT</scope>
    <scope>SUBCELLULAR LOCATION</scope>
    <scope>BIOPHYSICOCHEMICAL PROPERTIES</scope>
    <scope>SUBSTRATE SPECIFICITY</scope>
    <source>
        <tissue>Fetal brain</tissue>
    </source>
</reference>
<reference key="2">
    <citation type="submission" date="1998-05" db="EMBL/GenBank/DDBJ databases">
        <authorList>
            <person name="Mao Y.M."/>
            <person name="Xie Y."/>
            <person name="Zheng Z.H."/>
        </authorList>
    </citation>
    <scope>NUCLEOTIDE SEQUENCE [LARGE SCALE MRNA] (ISOFORM 1)</scope>
    <scope>VARIANT ITPAD THR-32</scope>
    <source>
        <tissue>Fetal brain</tissue>
    </source>
</reference>
<reference key="3">
    <citation type="submission" date="2001-01" db="EMBL/GenBank/DDBJ databases">
        <title>Molecular cloning of cDNA associated with human lung cancer antigen and study on its functions.</title>
        <authorList>
            <person name="Fan M.-Z."/>
            <person name="Chen Z."/>
            <person name="Cao Z.-M."/>
        </authorList>
    </citation>
    <scope>NUCLEOTIDE SEQUENCE [MRNA] (ISOFORM 1)</scope>
    <source>
        <tissue>Lung carcinoma</tissue>
    </source>
</reference>
<reference key="4">
    <citation type="submission" date="2006-12" db="EMBL/GenBank/DDBJ databases">
        <authorList>
            <person name="Danaei Y."/>
            <person name="Behmanesh M."/>
            <person name="Sadeghi Zadeh M."/>
        </authorList>
    </citation>
    <scope>NUCLEOTIDE SEQUENCE [MRNA] (ISOFORMS 1 AND 2)</scope>
</reference>
<reference key="5">
    <citation type="submission" date="2001-05" db="EMBL/GenBank/DDBJ databases">
        <title>Identification of immuno-peptidmics that are recognized by tumor-reactive CTL generated from TIL of colon cancer patients.</title>
        <authorList>
            <person name="Shichijo S."/>
            <person name="Itoh K."/>
        </authorList>
    </citation>
    <scope>NUCLEOTIDE SEQUENCE [LARGE SCALE MRNA] (ISOFORM 1)</scope>
    <source>
        <tissue>Colon adenocarcinoma</tissue>
    </source>
</reference>
<reference key="6">
    <citation type="journal article" date="2001" name="Nature">
        <title>The DNA sequence and comparative analysis of human chromosome 20.</title>
        <authorList>
            <person name="Deloukas P."/>
            <person name="Matthews L.H."/>
            <person name="Ashurst J.L."/>
            <person name="Burton J."/>
            <person name="Gilbert J.G.R."/>
            <person name="Jones M."/>
            <person name="Stavrides G."/>
            <person name="Almeida J.P."/>
            <person name="Babbage A.K."/>
            <person name="Bagguley C.L."/>
            <person name="Bailey J."/>
            <person name="Barlow K.F."/>
            <person name="Bates K.N."/>
            <person name="Beard L.M."/>
            <person name="Beare D.M."/>
            <person name="Beasley O.P."/>
            <person name="Bird C.P."/>
            <person name="Blakey S.E."/>
            <person name="Bridgeman A.M."/>
            <person name="Brown A.J."/>
            <person name="Buck D."/>
            <person name="Burrill W.D."/>
            <person name="Butler A.P."/>
            <person name="Carder C."/>
            <person name="Carter N.P."/>
            <person name="Chapman J.C."/>
            <person name="Clamp M."/>
            <person name="Clark G."/>
            <person name="Clark L.N."/>
            <person name="Clark S.Y."/>
            <person name="Clee C.M."/>
            <person name="Clegg S."/>
            <person name="Cobley V.E."/>
            <person name="Collier R.E."/>
            <person name="Connor R.E."/>
            <person name="Corby N.R."/>
            <person name="Coulson A."/>
            <person name="Coville G.J."/>
            <person name="Deadman R."/>
            <person name="Dhami P.D."/>
            <person name="Dunn M."/>
            <person name="Ellington A.G."/>
            <person name="Frankland J.A."/>
            <person name="Fraser A."/>
            <person name="French L."/>
            <person name="Garner P."/>
            <person name="Grafham D.V."/>
            <person name="Griffiths C."/>
            <person name="Griffiths M.N.D."/>
            <person name="Gwilliam R."/>
            <person name="Hall R.E."/>
            <person name="Hammond S."/>
            <person name="Harley J.L."/>
            <person name="Heath P.D."/>
            <person name="Ho S."/>
            <person name="Holden J.L."/>
            <person name="Howden P.J."/>
            <person name="Huckle E."/>
            <person name="Hunt A.R."/>
            <person name="Hunt S.E."/>
            <person name="Jekosch K."/>
            <person name="Johnson C.M."/>
            <person name="Johnson D."/>
            <person name="Kay M.P."/>
            <person name="Kimberley A.M."/>
            <person name="King A."/>
            <person name="Knights A."/>
            <person name="Laird G.K."/>
            <person name="Lawlor S."/>
            <person name="Lehvaeslaiho M.H."/>
            <person name="Leversha M.A."/>
            <person name="Lloyd C."/>
            <person name="Lloyd D.M."/>
            <person name="Lovell J.D."/>
            <person name="Marsh V.L."/>
            <person name="Martin S.L."/>
            <person name="McConnachie L.J."/>
            <person name="McLay K."/>
            <person name="McMurray A.A."/>
            <person name="Milne S.A."/>
            <person name="Mistry D."/>
            <person name="Moore M.J.F."/>
            <person name="Mullikin J.C."/>
            <person name="Nickerson T."/>
            <person name="Oliver K."/>
            <person name="Parker A."/>
            <person name="Patel R."/>
            <person name="Pearce T.A.V."/>
            <person name="Peck A.I."/>
            <person name="Phillimore B.J.C.T."/>
            <person name="Prathalingam S.R."/>
            <person name="Plumb R.W."/>
            <person name="Ramsay H."/>
            <person name="Rice C.M."/>
            <person name="Ross M.T."/>
            <person name="Scott C.E."/>
            <person name="Sehra H.K."/>
            <person name="Shownkeen R."/>
            <person name="Sims S."/>
            <person name="Skuce C.D."/>
            <person name="Smith M.L."/>
            <person name="Soderlund C."/>
            <person name="Steward C.A."/>
            <person name="Sulston J.E."/>
            <person name="Swann R.M."/>
            <person name="Sycamore N."/>
            <person name="Taylor R."/>
            <person name="Tee L."/>
            <person name="Thomas D.W."/>
            <person name="Thorpe A."/>
            <person name="Tracey A."/>
            <person name="Tromans A.C."/>
            <person name="Vaudin M."/>
            <person name="Wall M."/>
            <person name="Wallis J.M."/>
            <person name="Whitehead S.L."/>
            <person name="Whittaker P."/>
            <person name="Willey D.L."/>
            <person name="Williams L."/>
            <person name="Williams S.A."/>
            <person name="Wilming L."/>
            <person name="Wray P.W."/>
            <person name="Hubbard T."/>
            <person name="Durbin R.M."/>
            <person name="Bentley D.R."/>
            <person name="Beck S."/>
            <person name="Rogers J."/>
        </authorList>
    </citation>
    <scope>NUCLEOTIDE SEQUENCE [LARGE SCALE GENOMIC DNA]</scope>
</reference>
<reference key="7">
    <citation type="submission" date="2005-09" db="EMBL/GenBank/DDBJ databases">
        <authorList>
            <person name="Mural R.J."/>
            <person name="Istrail S."/>
            <person name="Sutton G."/>
            <person name="Florea L."/>
            <person name="Halpern A.L."/>
            <person name="Mobarry C.M."/>
            <person name="Lippert R."/>
            <person name="Walenz B."/>
            <person name="Shatkay H."/>
            <person name="Dew I."/>
            <person name="Miller J.R."/>
            <person name="Flanigan M.J."/>
            <person name="Edwards N.J."/>
            <person name="Bolanos R."/>
            <person name="Fasulo D."/>
            <person name="Halldorsson B.V."/>
            <person name="Hannenhalli S."/>
            <person name="Turner R."/>
            <person name="Yooseph S."/>
            <person name="Lu F."/>
            <person name="Nusskern D.R."/>
            <person name="Shue B.C."/>
            <person name="Zheng X.H."/>
            <person name="Zhong F."/>
            <person name="Delcher A.L."/>
            <person name="Huson D.H."/>
            <person name="Kravitz S.A."/>
            <person name="Mouchard L."/>
            <person name="Reinert K."/>
            <person name="Remington K.A."/>
            <person name="Clark A.G."/>
            <person name="Waterman M.S."/>
            <person name="Eichler E.E."/>
            <person name="Adams M.D."/>
            <person name="Hunkapiller M.W."/>
            <person name="Myers E.W."/>
            <person name="Venter J.C."/>
        </authorList>
    </citation>
    <scope>NUCLEOTIDE SEQUENCE [LARGE SCALE GENOMIC DNA]</scope>
</reference>
<reference key="8">
    <citation type="journal article" date="2004" name="Genome Res.">
        <title>The status, quality, and expansion of the NIH full-length cDNA project: the Mammalian Gene Collection (MGC).</title>
        <authorList>
            <consortium name="The MGC Project Team"/>
        </authorList>
    </citation>
    <scope>NUCLEOTIDE SEQUENCE [LARGE SCALE MRNA] (ISOFORMS 1 AND 3)</scope>
    <source>
        <tissue>Lung carcinoma</tissue>
        <tissue>Neuroblastoma</tissue>
    </source>
</reference>
<reference key="9">
    <citation type="submission" date="2009-03" db="UniProtKB">
        <authorList>
            <person name="Bienvenut W.V."/>
            <person name="Waridel P."/>
            <person name="Quadroni M."/>
        </authorList>
    </citation>
    <scope>PROTEIN SEQUENCE OF 2-9; 40-56; 95-110 AND 181-194</scope>
    <scope>CLEAVAGE OF INITIATOR METHIONINE</scope>
    <scope>ACETYLATION AT ALA-2</scope>
    <scope>IDENTIFICATION BY MASS SPECTROMETRY</scope>
    <source>
        <tissue>Embryonic kidney</tissue>
    </source>
</reference>
<reference key="10">
    <citation type="submission" date="2008-12" db="UniProtKB">
        <authorList>
            <person name="Lubec G."/>
            <person name="Afjehi-Sadat L."/>
            <person name="Chen W.-Q."/>
            <person name="Sun Y."/>
        </authorList>
    </citation>
    <scope>PROTEIN SEQUENCE OF 10-56 AND 95-130</scope>
    <scope>IDENTIFICATION BY MASS SPECTROMETRY</scope>
    <source>
        <tissue>Brain</tissue>
        <tissue>Cajal-Retzius cell</tissue>
        <tissue>Fetal brain cortex</tissue>
    </source>
</reference>
<reference key="11">
    <citation type="journal article" date="2007" name="J. Biol. Chem.">
        <title>Substrate specificity of RdgB protein, a deoxyribonucleoside triphosphate pyrophosphohydrolase.</title>
        <authorList>
            <person name="Burgis N.E."/>
            <person name="Cunningham R.P."/>
        </authorList>
    </citation>
    <scope>SUBSTRATE SPECIFICITY</scope>
    <scope>FUNCTION</scope>
    <scope>CATALYTIC ACTIVITY</scope>
    <scope>BIOPHYSICOCHEMICAL PROPERTIES</scope>
</reference>
<reference key="12">
    <citation type="journal article" date="2011" name="BMC Syst. Biol.">
        <title>Initial characterization of the human central proteome.</title>
        <authorList>
            <person name="Burkard T.R."/>
            <person name="Planyavsky M."/>
            <person name="Kaupe I."/>
            <person name="Breitwieser F.P."/>
            <person name="Buerckstuemmer T."/>
            <person name="Bennett K.L."/>
            <person name="Superti-Furga G."/>
            <person name="Colinge J."/>
        </authorList>
    </citation>
    <scope>IDENTIFICATION BY MASS SPECTROMETRY [LARGE SCALE ANALYSIS]</scope>
</reference>
<reference key="13">
    <citation type="journal article" date="2015" name="Ann. Neurol.">
        <title>Recessive ITPA mutations cause an early infantile encephalopathy.</title>
        <authorList>
            <person name="Kevelam S.H."/>
            <person name="Bierau J."/>
            <person name="Salvarinova R."/>
            <person name="Agrawal S."/>
            <person name="Honzik T."/>
            <person name="Visser D."/>
            <person name="Weiss M.M."/>
            <person name="Salomons G.S."/>
            <person name="Abbink T.E."/>
            <person name="Waisfisz Q."/>
            <person name="van der Knaap M.S."/>
        </authorList>
    </citation>
    <scope>INVOLVEMENT IN DEE35</scope>
    <scope>VARIANT DEE35 CYS-178</scope>
</reference>
<reference evidence="17" key="14">
    <citation type="journal article" date="2006" name="Acta Crystallogr. F">
        <title>Structure of the orthorhombic form of human inosine triphosphate pyrophosphatase.</title>
        <authorList>
            <person name="Porta J."/>
            <person name="Kolar C."/>
            <person name="Kozmin S.G."/>
            <person name="Pavlov Y.I."/>
            <person name="Borgstahl G.E."/>
        </authorList>
    </citation>
    <scope>X-RAY CRYSTALLOGRAPHY (1.63 ANGSTROMS)</scope>
</reference>
<reference evidence="16 18" key="15">
    <citation type="journal article" date="2007" name="J. Biol. Chem.">
        <title>Crystal structure of human inosine triphosphatase. Substrate binding and implication of the inosine triphosphatase deficiency mutation P32T.</title>
        <authorList>
            <person name="Stenmark P."/>
            <person name="Kursula P."/>
            <person name="Flodin S."/>
            <person name="Graslund S."/>
            <person name="Landry R."/>
            <person name="Nordlund P."/>
            <person name="Schueler H."/>
        </authorList>
    </citation>
    <scope>X-RAY CRYSTALLOGRAPHY (1.1 ANGSTROMS) ALONE AND IN COMPLEX WITH ITP AND MAGNESIUM</scope>
    <scope>COFACTOR</scope>
</reference>
<reference key="16">
    <citation type="journal article" date="2002" name="Hum. Genet.">
        <title>Genetic basis of inosine triphosphate pyrophosphohydrolase deficiency.</title>
        <authorList>
            <person name="Sumi S."/>
            <person name="Marinaki A.M."/>
            <person name="Arenas M."/>
            <person name="Fairbanks L."/>
            <person name="Shobowale-Bakre M."/>
            <person name="Rees D.C."/>
            <person name="Thein S.L."/>
            <person name="Ansari A."/>
            <person name="Sanderson J."/>
            <person name="De Abreu R.A."/>
            <person name="Simmonds H.A."/>
            <person name="Duley J.A."/>
        </authorList>
    </citation>
    <scope>VARIANT ITPAD THR-32</scope>
</reference>
<reference key="17">
    <citation type="journal article" date="2002" name="J. Hum. Genet.">
        <title>DNA polymorphisms in ITPA including basis of inosine triphosphatase deficiency.</title>
        <authorList>
            <person name="Cao H."/>
            <person name="Hegele R.A."/>
        </authorList>
    </citation>
    <scope>VARIANT ITPAD THR-32</scope>
</reference>
<evidence type="ECO:0000255" key="1">
    <source>
        <dbReference type="HAMAP-Rule" id="MF_03148"/>
    </source>
</evidence>
<evidence type="ECO:0000269" key="2">
    <source>
    </source>
</evidence>
<evidence type="ECO:0000269" key="3">
    <source>
    </source>
</evidence>
<evidence type="ECO:0000269" key="4">
    <source>
    </source>
</evidence>
<evidence type="ECO:0000269" key="5">
    <source>
    </source>
</evidence>
<evidence type="ECO:0000269" key="6">
    <source>
    </source>
</evidence>
<evidence type="ECO:0000269" key="7">
    <source>
    </source>
</evidence>
<evidence type="ECO:0000269" key="8">
    <source ref="2"/>
</evidence>
<evidence type="ECO:0000269" key="9">
    <source ref="9"/>
</evidence>
<evidence type="ECO:0000303" key="10">
    <source>
    </source>
</evidence>
<evidence type="ECO:0000303" key="11">
    <source>
    </source>
</evidence>
<evidence type="ECO:0000303" key="12">
    <source ref="4"/>
</evidence>
<evidence type="ECO:0000305" key="13"/>
<evidence type="ECO:0000305" key="14">
    <source>
    </source>
</evidence>
<evidence type="ECO:0000305" key="15">
    <source>
    </source>
</evidence>
<evidence type="ECO:0007744" key="16">
    <source>
        <dbReference type="PDB" id="2CAR"/>
    </source>
</evidence>
<evidence type="ECO:0007744" key="17">
    <source>
        <dbReference type="PDB" id="2I5D"/>
    </source>
</evidence>
<evidence type="ECO:0007744" key="18">
    <source>
        <dbReference type="PDB" id="2J4E"/>
    </source>
</evidence>
<evidence type="ECO:0007829" key="19">
    <source>
        <dbReference type="PDB" id="2CAR"/>
    </source>
</evidence>
<evidence type="ECO:0007829" key="20">
    <source>
        <dbReference type="PDB" id="2J4E"/>
    </source>
</evidence>
<feature type="initiator methionine" description="Removed" evidence="1 9">
    <location>
        <position position="1"/>
    </location>
</feature>
<feature type="chain" id="PRO_0000178280" description="Inosine triphosphate pyrophosphatase">
    <location>
        <begin position="2"/>
        <end position="194"/>
    </location>
</feature>
<feature type="binding site" evidence="6 18">
    <location>
        <begin position="14"/>
        <end position="19"/>
    </location>
    <ligand>
        <name>ITP</name>
        <dbReference type="ChEBI" id="CHEBI:61402"/>
    </ligand>
</feature>
<feature type="binding site" evidence="6 18">
    <location>
        <position position="44"/>
    </location>
    <ligand>
        <name>Mg(2+)</name>
        <dbReference type="ChEBI" id="CHEBI:18420"/>
    </ligand>
</feature>
<feature type="binding site" evidence="6 18">
    <location>
        <position position="56"/>
    </location>
    <ligand>
        <name>ITP</name>
        <dbReference type="ChEBI" id="CHEBI:61402"/>
    </ligand>
</feature>
<feature type="binding site" evidence="6 18">
    <location>
        <begin position="72"/>
        <end position="73"/>
    </location>
    <ligand>
        <name>ITP</name>
        <dbReference type="ChEBI" id="CHEBI:61402"/>
    </ligand>
</feature>
<feature type="binding site" evidence="6 18">
    <location>
        <position position="89"/>
    </location>
    <ligand>
        <name>ITP</name>
        <dbReference type="ChEBI" id="CHEBI:61402"/>
    </ligand>
</feature>
<feature type="binding site" evidence="6 18">
    <location>
        <begin position="149"/>
        <end position="152"/>
    </location>
    <ligand>
        <name>ITP</name>
        <dbReference type="ChEBI" id="CHEBI:61402"/>
    </ligand>
</feature>
<feature type="binding site" evidence="6 18">
    <location>
        <position position="172"/>
    </location>
    <ligand>
        <name>ITP</name>
        <dbReference type="ChEBI" id="CHEBI:61402"/>
    </ligand>
</feature>
<feature type="binding site" evidence="6 18">
    <location>
        <begin position="177"/>
        <end position="178"/>
    </location>
    <ligand>
        <name>ITP</name>
        <dbReference type="ChEBI" id="CHEBI:61402"/>
    </ligand>
</feature>
<feature type="modified residue" description="N-acetylalanine" evidence="1 9">
    <location>
        <position position="2"/>
    </location>
</feature>
<feature type="splice variant" id="VSP_042548" description="In isoform 2." evidence="12">
    <location>
        <begin position="7"/>
        <end position="23"/>
    </location>
</feature>
<feature type="splice variant" id="VSP_045545" description="In isoform 3." evidence="11">
    <location>
        <begin position="23"/>
        <end position="63"/>
    </location>
</feature>
<feature type="sequence variant" id="VAR_015576" description="In ITPAD; complete loss of enzymatic activity at homozygosity; partial loss of activity without ITP accumulation in heterozygous individuals; dbSNP:rs1127354." evidence="3 4 8">
    <original>P</original>
    <variation>T</variation>
    <location>
        <position position="32"/>
    </location>
</feature>
<feature type="sequence variant" id="VAR_075084" description="In DEE35; uncertain significance; dbSNP:rs746930990." evidence="7">
    <original>R</original>
    <variation>C</variation>
    <location>
        <position position="178"/>
    </location>
</feature>
<feature type="sequence conflict" description="In Ref. 1; AAK21848." evidence="13" ref="1">
    <original>C</original>
    <variation>R</variation>
    <location>
        <position position="33"/>
    </location>
</feature>
<feature type="sequence conflict" description="In Ref. 2; AAG43165." evidence="13" ref="2">
    <original>D</original>
    <variation>G</variation>
    <location>
        <position position="41"/>
    </location>
</feature>
<feature type="helix" evidence="19">
    <location>
        <begin position="2"/>
        <end position="5"/>
    </location>
</feature>
<feature type="strand" evidence="19">
    <location>
        <begin position="9"/>
        <end position="13"/>
    </location>
</feature>
<feature type="helix" evidence="19">
    <location>
        <begin position="17"/>
        <end position="27"/>
    </location>
</feature>
<feature type="strand" evidence="19">
    <location>
        <begin position="33"/>
        <end position="38"/>
    </location>
</feature>
<feature type="strand" evidence="20">
    <location>
        <begin position="45"/>
        <end position="47"/>
    </location>
</feature>
<feature type="helix" evidence="19">
    <location>
        <begin position="49"/>
        <end position="64"/>
    </location>
</feature>
<feature type="strand" evidence="19">
    <location>
        <begin position="68"/>
        <end position="77"/>
    </location>
</feature>
<feature type="helix" evidence="19">
    <location>
        <begin position="78"/>
        <end position="80"/>
    </location>
</feature>
<feature type="helix" evidence="19">
    <location>
        <begin position="88"/>
        <end position="102"/>
    </location>
</feature>
<feature type="turn" evidence="19">
    <location>
        <begin position="103"/>
        <end position="106"/>
    </location>
</feature>
<feature type="strand" evidence="19">
    <location>
        <begin position="111"/>
        <end position="121"/>
    </location>
</feature>
<feature type="strand" evidence="20">
    <location>
        <begin position="125"/>
        <end position="127"/>
    </location>
</feature>
<feature type="strand" evidence="19">
    <location>
        <begin position="130"/>
        <end position="140"/>
    </location>
</feature>
<feature type="helix" evidence="19">
    <location>
        <begin position="152"/>
        <end position="154"/>
    </location>
</feature>
<feature type="strand" evidence="19">
    <location>
        <begin position="155"/>
        <end position="157"/>
    </location>
</feature>
<feature type="turn" evidence="19">
    <location>
        <begin position="164"/>
        <end position="166"/>
    </location>
</feature>
<feature type="helix" evidence="19">
    <location>
        <begin position="169"/>
        <end position="175"/>
    </location>
</feature>
<feature type="helix" evidence="19">
    <location>
        <begin position="177"/>
        <end position="189"/>
    </location>
</feature>
<accession>Q9BY32</accession>
<accession>A2A2N2</accession>
<accession>A4UIM5</accession>
<accession>B2BCH7</accession>
<accession>O14878</accession>
<accession>Q5JWH4</accession>
<accession>Q9BYN1</accession>
<accession>Q9BYX0</accession>
<accession>Q9H3H8</accession>
<organism>
    <name type="scientific">Homo sapiens</name>
    <name type="common">Human</name>
    <dbReference type="NCBI Taxonomy" id="9606"/>
    <lineage>
        <taxon>Eukaryota</taxon>
        <taxon>Metazoa</taxon>
        <taxon>Chordata</taxon>
        <taxon>Craniata</taxon>
        <taxon>Vertebrata</taxon>
        <taxon>Euteleostomi</taxon>
        <taxon>Mammalia</taxon>
        <taxon>Eutheria</taxon>
        <taxon>Euarchontoglires</taxon>
        <taxon>Primates</taxon>
        <taxon>Haplorrhini</taxon>
        <taxon>Catarrhini</taxon>
        <taxon>Hominidae</taxon>
        <taxon>Homo</taxon>
    </lineage>
</organism>